<feature type="chain" id="PRO_0000344259" description="NAD(P)H-quinone oxidoreductase subunit 2 A, chloroplastic">
    <location>
        <begin position="1"/>
        <end position="494"/>
    </location>
</feature>
<feature type="transmembrane region" description="Helical" evidence="1">
    <location>
        <begin position="13"/>
        <end position="33"/>
    </location>
</feature>
<feature type="transmembrane region" description="Helical" evidence="1">
    <location>
        <begin position="39"/>
        <end position="59"/>
    </location>
</feature>
<feature type="transmembrane region" description="Helical" evidence="1">
    <location>
        <begin position="81"/>
        <end position="101"/>
    </location>
</feature>
<feature type="transmembrane region" description="Helical" evidence="1">
    <location>
        <begin position="107"/>
        <end position="127"/>
    </location>
</feature>
<feature type="transmembrane region" description="Helical" evidence="1">
    <location>
        <begin position="131"/>
        <end position="151"/>
    </location>
</feature>
<feature type="transmembrane region" description="Helical" evidence="1">
    <location>
        <begin position="166"/>
        <end position="186"/>
    </location>
</feature>
<feature type="transmembrane region" description="Helical" evidence="1">
    <location>
        <begin position="211"/>
        <end position="231"/>
    </location>
</feature>
<feature type="transmembrane region" description="Helical" evidence="1">
    <location>
        <begin position="243"/>
        <end position="263"/>
    </location>
</feature>
<feature type="transmembrane region" description="Helical" evidence="1">
    <location>
        <begin position="277"/>
        <end position="297"/>
    </location>
</feature>
<feature type="transmembrane region" description="Helical" evidence="1">
    <location>
        <begin position="305"/>
        <end position="325"/>
    </location>
</feature>
<feature type="transmembrane region" description="Helical" evidence="1">
    <location>
        <begin position="336"/>
        <end position="356"/>
    </location>
</feature>
<feature type="transmembrane region" description="Helical" evidence="1">
    <location>
        <begin position="378"/>
        <end position="398"/>
    </location>
</feature>
<feature type="transmembrane region" description="Helical" evidence="1">
    <location>
        <begin position="411"/>
        <end position="433"/>
    </location>
</feature>
<feature type="transmembrane region" description="Helical" evidence="1">
    <location>
        <begin position="468"/>
        <end position="488"/>
    </location>
</feature>
<keyword id="KW-0150">Chloroplast</keyword>
<keyword id="KW-0472">Membrane</keyword>
<keyword id="KW-0520">NAD</keyword>
<keyword id="KW-0521">NADP</keyword>
<keyword id="KW-0934">Plastid</keyword>
<keyword id="KW-0618">Plastoquinone</keyword>
<keyword id="KW-0874">Quinone</keyword>
<keyword id="KW-0793">Thylakoid</keyword>
<keyword id="KW-1278">Translocase</keyword>
<keyword id="KW-0812">Transmembrane</keyword>
<keyword id="KW-1133">Transmembrane helix</keyword>
<keyword id="KW-0813">Transport</keyword>
<organism>
    <name type="scientific">Angiopteris evecta</name>
    <name type="common">Mule's foot fern</name>
    <name type="synonym">Polypodium evectum</name>
    <dbReference type="NCBI Taxonomy" id="13825"/>
    <lineage>
        <taxon>Eukaryota</taxon>
        <taxon>Viridiplantae</taxon>
        <taxon>Streptophyta</taxon>
        <taxon>Embryophyta</taxon>
        <taxon>Tracheophyta</taxon>
        <taxon>Polypodiopsida</taxon>
        <taxon>Marattiidae</taxon>
        <taxon>Marattiales</taxon>
        <taxon>Marattiaceae</taxon>
        <taxon>Angiopteris</taxon>
    </lineage>
</organism>
<comment type="function">
    <text evidence="1">NDH shuttles electrons from NAD(P)H:plastoquinone, via FMN and iron-sulfur (Fe-S) centers, to quinones in the photosynthetic chain and possibly in a chloroplast respiratory chain. The immediate electron acceptor for the enzyme in this species is believed to be plastoquinone. Couples the redox reaction to proton translocation, and thus conserves the redox energy in a proton gradient.</text>
</comment>
<comment type="catalytic activity">
    <reaction evidence="1">
        <text>a plastoquinone + NADH + (n+1) H(+)(in) = a plastoquinol + NAD(+) + n H(+)(out)</text>
        <dbReference type="Rhea" id="RHEA:42608"/>
        <dbReference type="Rhea" id="RHEA-COMP:9561"/>
        <dbReference type="Rhea" id="RHEA-COMP:9562"/>
        <dbReference type="ChEBI" id="CHEBI:15378"/>
        <dbReference type="ChEBI" id="CHEBI:17757"/>
        <dbReference type="ChEBI" id="CHEBI:57540"/>
        <dbReference type="ChEBI" id="CHEBI:57945"/>
        <dbReference type="ChEBI" id="CHEBI:62192"/>
    </reaction>
</comment>
<comment type="catalytic activity">
    <reaction evidence="1">
        <text>a plastoquinone + NADPH + (n+1) H(+)(in) = a plastoquinol + NADP(+) + n H(+)(out)</text>
        <dbReference type="Rhea" id="RHEA:42612"/>
        <dbReference type="Rhea" id="RHEA-COMP:9561"/>
        <dbReference type="Rhea" id="RHEA-COMP:9562"/>
        <dbReference type="ChEBI" id="CHEBI:15378"/>
        <dbReference type="ChEBI" id="CHEBI:17757"/>
        <dbReference type="ChEBI" id="CHEBI:57783"/>
        <dbReference type="ChEBI" id="CHEBI:58349"/>
        <dbReference type="ChEBI" id="CHEBI:62192"/>
    </reaction>
</comment>
<comment type="subunit">
    <text evidence="1">NDH is composed of at least 16 different subunits, 5 of which are encoded in the nucleus.</text>
</comment>
<comment type="subcellular location">
    <subcellularLocation>
        <location evidence="1">Plastid</location>
        <location evidence="1">Chloroplast thylakoid membrane</location>
        <topology evidence="1">Multi-pass membrane protein</topology>
    </subcellularLocation>
</comment>
<comment type="similarity">
    <text evidence="1">Belongs to the complex I subunit 2 family.</text>
</comment>
<geneLocation type="chloroplast"/>
<dbReference type="EC" id="7.1.1.-" evidence="1"/>
<dbReference type="EMBL" id="DQ821119">
    <property type="protein sequence ID" value="ABG79644.1"/>
    <property type="molecule type" value="Genomic_DNA"/>
</dbReference>
<dbReference type="SMR" id="P0CC27"/>
<dbReference type="GO" id="GO:0009535">
    <property type="term" value="C:chloroplast thylakoid membrane"/>
    <property type="evidence" value="ECO:0007669"/>
    <property type="project" value="UniProtKB-SubCell"/>
</dbReference>
<dbReference type="GO" id="GO:0008137">
    <property type="term" value="F:NADH dehydrogenase (ubiquinone) activity"/>
    <property type="evidence" value="ECO:0007669"/>
    <property type="project" value="InterPro"/>
</dbReference>
<dbReference type="GO" id="GO:0048038">
    <property type="term" value="F:quinone binding"/>
    <property type="evidence" value="ECO:0007669"/>
    <property type="project" value="UniProtKB-KW"/>
</dbReference>
<dbReference type="GO" id="GO:0042773">
    <property type="term" value="P:ATP synthesis coupled electron transport"/>
    <property type="evidence" value="ECO:0007669"/>
    <property type="project" value="InterPro"/>
</dbReference>
<dbReference type="GO" id="GO:0019684">
    <property type="term" value="P:photosynthesis, light reaction"/>
    <property type="evidence" value="ECO:0007669"/>
    <property type="project" value="UniProtKB-UniRule"/>
</dbReference>
<dbReference type="HAMAP" id="MF_00445">
    <property type="entry name" value="NDH1_NuoN_1"/>
    <property type="match status" value="1"/>
</dbReference>
<dbReference type="InterPro" id="IPR010096">
    <property type="entry name" value="NADH-Q_OxRdtase_suN/2"/>
</dbReference>
<dbReference type="InterPro" id="IPR001750">
    <property type="entry name" value="ND/Mrp_TM"/>
</dbReference>
<dbReference type="InterPro" id="IPR045693">
    <property type="entry name" value="Ndh2_N"/>
</dbReference>
<dbReference type="NCBIfam" id="TIGR01770">
    <property type="entry name" value="NDH_I_N"/>
    <property type="match status" value="1"/>
</dbReference>
<dbReference type="NCBIfam" id="NF002701">
    <property type="entry name" value="PRK02504.1"/>
    <property type="match status" value="1"/>
</dbReference>
<dbReference type="PANTHER" id="PTHR22773">
    <property type="entry name" value="NADH DEHYDROGENASE"/>
    <property type="match status" value="1"/>
</dbReference>
<dbReference type="Pfam" id="PF19530">
    <property type="entry name" value="Ndh2_N"/>
    <property type="match status" value="1"/>
</dbReference>
<dbReference type="Pfam" id="PF00361">
    <property type="entry name" value="Proton_antipo_M"/>
    <property type="match status" value="1"/>
</dbReference>
<dbReference type="PRINTS" id="PR01434">
    <property type="entry name" value="NADHDHGNASE5"/>
</dbReference>
<gene>
    <name evidence="1" type="primary">ndhB1</name>
</gene>
<name>NU2C1_ANGEV</name>
<proteinExistence type="inferred from homology"/>
<sequence length="494" mass="54830">MKDFNLFLLYGNSILPECILILSLIVTIIIDLISDEKNTPWLYLVSLTALVTSVVILLFQWKEEPVSTFFETFQINSFNNIFRLFILICSLLCIPLSIDYIQCTKTALTEFLLFILTATLGGMFLCCANDLVTIFVALECLGLSSYLLSGYTKKDVRSNEATMKYLLMGGASSSILVYGFSLLYGLSGGEIQLQRIVNGLLTTQMYNSTGMFISMIFLLVGVGFKLSLVPFHQWTPDVYEGSPTPVVAFFSVTSKVAALALATRLFNILFPSSSTEWHLLLEILAISSMILGNFIAVTQISMKRMLAYSSISQIGYIIIGVIAAESNNGYASMITYMLIYIFMNLGTFACITLFGLRTGTDNIRDYAGLSTKDPLLTLSLVLCLLSLGGIPPLSGFFGKLYLFWCGWKAGLYFLVPIALSTSVISMYYYLKIIKLLFTKQNRQLTIYIQNYKVSSYALIPKSSIEITMIICVVASTLPGILINPIIAIAQNTFF</sequence>
<reference key="1">
    <citation type="journal article" date="2007" name="Am. Fern J.">
        <title>The complete plastid genome sequence of Angiopteris evecta (G. Forst.) Hoffm. (Marattiaceae).</title>
        <authorList>
            <person name="Roper J.M."/>
            <person name="Hansen S.K."/>
            <person name="Wolf P.G."/>
            <person name="Karol K.G."/>
            <person name="Mandoli D.F."/>
            <person name="Everett K.D.E."/>
            <person name="Kuehl J.V."/>
            <person name="Boore J.L."/>
        </authorList>
    </citation>
    <scope>NUCLEOTIDE SEQUENCE [LARGE SCALE GENOMIC DNA]</scope>
</reference>
<protein>
    <recommendedName>
        <fullName evidence="1">NAD(P)H-quinone oxidoreductase subunit 2 A, chloroplastic</fullName>
        <ecNumber evidence="1">7.1.1.-</ecNumber>
    </recommendedName>
    <alternativeName>
        <fullName evidence="1">NAD(P)H dehydrogenase, subunit 2 A</fullName>
    </alternativeName>
    <alternativeName>
        <fullName evidence="1">NADH-plastoquinone oxidoreductase subunit 2 A</fullName>
    </alternativeName>
</protein>
<accession>P0CC27</accession>
<accession>A2T377</accession>
<evidence type="ECO:0000255" key="1">
    <source>
        <dbReference type="HAMAP-Rule" id="MF_00445"/>
    </source>
</evidence>